<comment type="subcellular location">
    <subcellularLocation>
        <location evidence="1">Cell inner membrane</location>
        <topology evidence="1">Multi-pass membrane protein</topology>
    </subcellularLocation>
</comment>
<comment type="similarity">
    <text evidence="1">Belongs to the UPF0283 family.</text>
</comment>
<protein>
    <recommendedName>
        <fullName evidence="1">UPF0283 membrane protein Arad_2632</fullName>
    </recommendedName>
</protein>
<sequence>MTKPTEDDPKGISRRPAAFSLEQEASREGAHTKTTAETPRRKPQSFDTEIVLTPDEEDPFLNPALTASDAEAAIAAPRRRRFSFGKVALSAFGILVSLAFGLWTDELIRNLFSRADWLGYTALTVLAIGILAVLAIVVRETAGMMRLAAVQTIKAEADAAVVETRPARAKALVQRLCTLLEANPATAKGRATLKAAEDDIIDAPHLIDLAERELLGPLDRSARVLILGASKRVSVVTAVSPRALVDILYVLYESAKLVRAMAELYGGRPGGLGMLKLMRDVLAHLAVTGSIAVGDSIVQQLIGHGLASKLSARLGEGVVNGMMTARIGIAAMDLCRPLSFKALKRPGIGDFVGDLAPNITGR</sequence>
<keyword id="KW-0997">Cell inner membrane</keyword>
<keyword id="KW-1003">Cell membrane</keyword>
<keyword id="KW-0472">Membrane</keyword>
<keyword id="KW-0812">Transmembrane</keyword>
<keyword id="KW-1133">Transmembrane helix</keyword>
<name>Y2632_RHIR8</name>
<proteinExistence type="inferred from homology"/>
<feature type="chain" id="PRO_1000149855" description="UPF0283 membrane protein Arad_2632">
    <location>
        <begin position="1"/>
        <end position="362"/>
    </location>
</feature>
<feature type="transmembrane region" description="Helical" evidence="1">
    <location>
        <begin position="82"/>
        <end position="102"/>
    </location>
</feature>
<feature type="transmembrane region" description="Helical" evidence="1">
    <location>
        <begin position="118"/>
        <end position="138"/>
    </location>
</feature>
<feature type="region of interest" description="Disordered" evidence="2">
    <location>
        <begin position="1"/>
        <end position="47"/>
    </location>
</feature>
<feature type="compositionally biased region" description="Basic and acidic residues" evidence="2">
    <location>
        <begin position="1"/>
        <end position="11"/>
    </location>
</feature>
<reference key="1">
    <citation type="journal article" date="2009" name="J. Bacteriol.">
        <title>Genome sequences of three Agrobacterium biovars help elucidate the evolution of multichromosome genomes in bacteria.</title>
        <authorList>
            <person name="Slater S.C."/>
            <person name="Goldman B.S."/>
            <person name="Goodner B."/>
            <person name="Setubal J.C."/>
            <person name="Farrand S.K."/>
            <person name="Nester E.W."/>
            <person name="Burr T.J."/>
            <person name="Banta L."/>
            <person name="Dickerman A.W."/>
            <person name="Paulsen I."/>
            <person name="Otten L."/>
            <person name="Suen G."/>
            <person name="Welch R."/>
            <person name="Almeida N.F."/>
            <person name="Arnold F."/>
            <person name="Burton O.T."/>
            <person name="Du Z."/>
            <person name="Ewing A."/>
            <person name="Godsy E."/>
            <person name="Heisel S."/>
            <person name="Houmiel K.L."/>
            <person name="Jhaveri J."/>
            <person name="Lu J."/>
            <person name="Miller N.M."/>
            <person name="Norton S."/>
            <person name="Chen Q."/>
            <person name="Phoolcharoen W."/>
            <person name="Ohlin V."/>
            <person name="Ondrusek D."/>
            <person name="Pride N."/>
            <person name="Stricklin S.L."/>
            <person name="Sun J."/>
            <person name="Wheeler C."/>
            <person name="Wilson L."/>
            <person name="Zhu H."/>
            <person name="Wood D.W."/>
        </authorList>
    </citation>
    <scope>NUCLEOTIDE SEQUENCE [LARGE SCALE GENOMIC DNA]</scope>
    <source>
        <strain>K84 / ATCC BAA-868</strain>
    </source>
</reference>
<organism>
    <name type="scientific">Rhizobium rhizogenes (strain K84 / ATCC BAA-868)</name>
    <name type="common">Agrobacterium radiobacter</name>
    <dbReference type="NCBI Taxonomy" id="311403"/>
    <lineage>
        <taxon>Bacteria</taxon>
        <taxon>Pseudomonadati</taxon>
        <taxon>Pseudomonadota</taxon>
        <taxon>Alphaproteobacteria</taxon>
        <taxon>Hyphomicrobiales</taxon>
        <taxon>Rhizobiaceae</taxon>
        <taxon>Rhizobium/Agrobacterium group</taxon>
        <taxon>Rhizobium</taxon>
    </lineage>
</organism>
<dbReference type="EMBL" id="CP000628">
    <property type="protein sequence ID" value="ACM26777.1"/>
    <property type="molecule type" value="Genomic_DNA"/>
</dbReference>
<dbReference type="RefSeq" id="WP_012651602.1">
    <property type="nucleotide sequence ID" value="NC_011985.1"/>
</dbReference>
<dbReference type="STRING" id="311403.Arad_2632"/>
<dbReference type="KEGG" id="ara:Arad_2632"/>
<dbReference type="eggNOG" id="COG3768">
    <property type="taxonomic scope" value="Bacteria"/>
</dbReference>
<dbReference type="HOGENOM" id="CLU_057693_1_0_5"/>
<dbReference type="Proteomes" id="UP000001600">
    <property type="component" value="Chromosome 1"/>
</dbReference>
<dbReference type="GO" id="GO:0005886">
    <property type="term" value="C:plasma membrane"/>
    <property type="evidence" value="ECO:0007669"/>
    <property type="project" value="UniProtKB-SubCell"/>
</dbReference>
<dbReference type="HAMAP" id="MF_01085">
    <property type="entry name" value="UPF0283"/>
    <property type="match status" value="1"/>
</dbReference>
<dbReference type="InterPro" id="IPR021147">
    <property type="entry name" value="DUF697"/>
</dbReference>
<dbReference type="InterPro" id="IPR006507">
    <property type="entry name" value="UPF0283"/>
</dbReference>
<dbReference type="NCBIfam" id="TIGR01620">
    <property type="entry name" value="hyp_HI0043"/>
    <property type="match status" value="1"/>
</dbReference>
<dbReference type="PANTHER" id="PTHR39342">
    <property type="entry name" value="UPF0283 MEMBRANE PROTEIN YCJF"/>
    <property type="match status" value="1"/>
</dbReference>
<dbReference type="PANTHER" id="PTHR39342:SF1">
    <property type="entry name" value="UPF0283 MEMBRANE PROTEIN YCJF"/>
    <property type="match status" value="1"/>
</dbReference>
<dbReference type="Pfam" id="PF05128">
    <property type="entry name" value="DUF697"/>
    <property type="match status" value="1"/>
</dbReference>
<gene>
    <name type="ordered locus">Arad_2632</name>
</gene>
<accession>B9JFT7</accession>
<evidence type="ECO:0000255" key="1">
    <source>
        <dbReference type="HAMAP-Rule" id="MF_01085"/>
    </source>
</evidence>
<evidence type="ECO:0000256" key="2">
    <source>
        <dbReference type="SAM" id="MobiDB-lite"/>
    </source>
</evidence>